<proteinExistence type="evidence at protein level"/>
<protein>
    <recommendedName>
        <fullName evidence="9">NAC domain-containing protein 26</fullName>
        <shortName evidence="9">ANAC026</shortName>
    </recommendedName>
    <alternativeName>
        <fullName evidence="10">Protein VASCULAR RELATED NAC-DOMAIN 5</fullName>
    </alternativeName>
</protein>
<comment type="function">
    <text evidence="2 8">Transcription activator that binds to the secondary wall NAC binding element (SNBE), 5'-(T/A)NN(C/T)(T/C/G)TNNNNNNNA(A/C)GN(A/C/T)(A/T)-3', in the promoter of target genes (By similarity). Involved in xylem formation by promoting the expression of secondary wall-associated transcription factors and of genes involved in secondary wall biosynthesis and programmed cell death, genes driven by the secondary wall NAC binding element (SNBE). Triggers thickening of secondary walls (PubMed:25148240).</text>
</comment>
<comment type="subunit">
    <text evidence="7">Interacts with NAC083/VNI2.</text>
</comment>
<comment type="subcellular location">
    <subcellularLocation>
        <location evidence="1 3">Nucleus</location>
    </subcellularLocation>
</comment>
<comment type="tissue specificity">
    <text evidence="4 5 6 8">Detected in root vessels of protoxylems, outermost metaxylems, inner metaxylems, shoots and hypocotyls. Expressed in roots, hypocotyls, cotyledons and leaves (PubMed:18445131). Expressed in developing xylems (PubMed:16103214, PubMed:17565617). Specifically expressed in vessels in the secondary xylem of the root-hypocotyl region, and in vessels but not in interfascicular fibers in stems (PubMed:25148240).</text>
</comment>
<comment type="developmental stage">
    <text evidence="4 8">Up-regulated during xylem vessel element formation. Expressed preferentially in procambial cells adjacent to root meristem.</text>
</comment>
<comment type="domain">
    <text evidence="3">The NAC domain includes a DNA binding domain and a dimerization domain.</text>
</comment>
<comment type="similarity">
    <text evidence="11">Belongs to the plant vascular related NAC-domain protein family.</text>
</comment>
<comment type="sequence caution" evidence="11">
    <conflict type="erroneous gene model prediction">
        <sequence resource="EMBL-CDS" id="AAF19551"/>
    </conflict>
</comment>
<feature type="chain" id="PRO_0000433119" description="NAC domain-containing protein 26">
    <location>
        <begin position="1"/>
        <end position="394"/>
    </location>
</feature>
<feature type="domain" description="NAC" evidence="3">
    <location>
        <begin position="7"/>
        <end position="156"/>
    </location>
</feature>
<feature type="DNA-binding region" evidence="3">
    <location>
        <begin position="107"/>
        <end position="162"/>
    </location>
</feature>
<reference key="1">
    <citation type="journal article" date="2000" name="Nature">
        <title>Sequence and analysis of chromosome 1 of the plant Arabidopsis thaliana.</title>
        <authorList>
            <person name="Theologis A."/>
            <person name="Ecker J.R."/>
            <person name="Palm C.J."/>
            <person name="Federspiel N.A."/>
            <person name="Kaul S."/>
            <person name="White O."/>
            <person name="Alonso J."/>
            <person name="Altafi H."/>
            <person name="Araujo R."/>
            <person name="Bowman C.L."/>
            <person name="Brooks S.Y."/>
            <person name="Buehler E."/>
            <person name="Chan A."/>
            <person name="Chao Q."/>
            <person name="Chen H."/>
            <person name="Cheuk R.F."/>
            <person name="Chin C.W."/>
            <person name="Chung M.K."/>
            <person name="Conn L."/>
            <person name="Conway A.B."/>
            <person name="Conway A.R."/>
            <person name="Creasy T.H."/>
            <person name="Dewar K."/>
            <person name="Dunn P."/>
            <person name="Etgu P."/>
            <person name="Feldblyum T.V."/>
            <person name="Feng J.-D."/>
            <person name="Fong B."/>
            <person name="Fujii C.Y."/>
            <person name="Gill J.E."/>
            <person name="Goldsmith A.D."/>
            <person name="Haas B."/>
            <person name="Hansen N.F."/>
            <person name="Hughes B."/>
            <person name="Huizar L."/>
            <person name="Hunter J.L."/>
            <person name="Jenkins J."/>
            <person name="Johnson-Hopson C."/>
            <person name="Khan S."/>
            <person name="Khaykin E."/>
            <person name="Kim C.J."/>
            <person name="Koo H.L."/>
            <person name="Kremenetskaia I."/>
            <person name="Kurtz D.B."/>
            <person name="Kwan A."/>
            <person name="Lam B."/>
            <person name="Langin-Hooper S."/>
            <person name="Lee A."/>
            <person name="Lee J.M."/>
            <person name="Lenz C.A."/>
            <person name="Li J.H."/>
            <person name="Li Y.-P."/>
            <person name="Lin X."/>
            <person name="Liu S.X."/>
            <person name="Liu Z.A."/>
            <person name="Luros J.S."/>
            <person name="Maiti R."/>
            <person name="Marziali A."/>
            <person name="Militscher J."/>
            <person name="Miranda M."/>
            <person name="Nguyen M."/>
            <person name="Nierman W.C."/>
            <person name="Osborne B.I."/>
            <person name="Pai G."/>
            <person name="Peterson J."/>
            <person name="Pham P.K."/>
            <person name="Rizzo M."/>
            <person name="Rooney T."/>
            <person name="Rowley D."/>
            <person name="Sakano H."/>
            <person name="Salzberg S.L."/>
            <person name="Schwartz J.R."/>
            <person name="Shinn P."/>
            <person name="Southwick A.M."/>
            <person name="Sun H."/>
            <person name="Tallon L.J."/>
            <person name="Tambunga G."/>
            <person name="Toriumi M.J."/>
            <person name="Town C.D."/>
            <person name="Utterback T."/>
            <person name="Van Aken S."/>
            <person name="Vaysberg M."/>
            <person name="Vysotskaia V.S."/>
            <person name="Walker M."/>
            <person name="Wu D."/>
            <person name="Yu G."/>
            <person name="Fraser C.M."/>
            <person name="Venter J.C."/>
            <person name="Davis R.W."/>
        </authorList>
    </citation>
    <scope>NUCLEOTIDE SEQUENCE [LARGE SCALE GENOMIC DNA]</scope>
    <source>
        <strain>cv. Columbia</strain>
    </source>
</reference>
<reference key="2">
    <citation type="journal article" date="2017" name="Plant J.">
        <title>Araport11: a complete reannotation of the Arabidopsis thaliana reference genome.</title>
        <authorList>
            <person name="Cheng C.Y."/>
            <person name="Krishnakumar V."/>
            <person name="Chan A.P."/>
            <person name="Thibaud-Nissen F."/>
            <person name="Schobel S."/>
            <person name="Town C.D."/>
        </authorList>
    </citation>
    <scope>GENOME REANNOTATION</scope>
    <source>
        <strain>cv. Columbia</strain>
    </source>
</reference>
<reference key="3">
    <citation type="journal article" date="2003" name="DNA Res.">
        <title>Comprehensive analysis of NAC family genes in Oryza sativa and Arabidopsis thaliana.</title>
        <authorList>
            <person name="Ooka H."/>
            <person name="Satoh K."/>
            <person name="Doi K."/>
            <person name="Nagata T."/>
            <person name="Otomo Y."/>
            <person name="Murakami K."/>
            <person name="Matsubara K."/>
            <person name="Osato N."/>
            <person name="Kawai J."/>
            <person name="Carninci P."/>
            <person name="Hayashizaki Y."/>
            <person name="Suzuki K."/>
            <person name="Kojima K."/>
            <person name="Takahara Y."/>
            <person name="Yamamoto K."/>
            <person name="Kikuchi S."/>
        </authorList>
    </citation>
    <scope>GENE FAMILY</scope>
    <scope>NOMENCLATURE</scope>
</reference>
<reference key="4">
    <citation type="journal article" date="2005" name="Genes Dev.">
        <title>Transcription switches for protoxylem and metaxylem vessel formation.</title>
        <authorList>
            <person name="Kubo M."/>
            <person name="Udagawa M."/>
            <person name="Nishikubo N."/>
            <person name="Horiguchi G."/>
            <person name="Yamaguchi M."/>
            <person name="Ito J."/>
            <person name="Mimura T."/>
            <person name="Fukuda H."/>
            <person name="Demura T."/>
        </authorList>
    </citation>
    <scope>DEVELOPMENTAL STAGE</scope>
    <scope>TISSUE SPECIFICITY</scope>
    <scope>GENE FAMILY</scope>
    <scope>NOMENCLATURE</scope>
</reference>
<reference key="5">
    <citation type="journal article" date="2007" name="Plant J.">
        <title>ANAC012, a member of the plant-specific NAC transcription factor family, negatively regulates xylary fiber development in Arabidopsis thaliana.</title>
        <authorList>
            <person name="Ko J.-H."/>
            <person name="Yang S.H."/>
            <person name="Park A.H."/>
            <person name="Lerouxel O."/>
            <person name="Han K.-H."/>
        </authorList>
    </citation>
    <scope>TISSUE SPECIFICITY</scope>
</reference>
<reference key="6">
    <citation type="journal article" date="2008" name="Plant J.">
        <title>Vascular-related NAC-DOMAIN7 is involved in the differentiation of all types of xylem vessels in Arabidopsis roots and shoots.</title>
        <authorList>
            <person name="Yamaguchi M."/>
            <person name="Kubo M."/>
            <person name="Fukuda H."/>
            <person name="Demura T."/>
        </authorList>
    </citation>
    <scope>TISSUE SPECIFICITY</scope>
    <source>
        <strain>cv. Columbia</strain>
    </source>
</reference>
<reference key="7">
    <citation type="journal article" date="2010" name="Plant Cell">
        <title>VND-INTERACTING2, a NAC domain transcription factor, negatively regulates xylem vessel formation in Arabidopsis.</title>
        <authorList>
            <person name="Yamaguchi M."/>
            <person name="Ohtani M."/>
            <person name="Mitsuda N."/>
            <person name="Kubo M."/>
            <person name="Ohme-Takagi M."/>
            <person name="Fukuda H."/>
            <person name="Demura T."/>
        </authorList>
    </citation>
    <scope>INTERACTION WITH NAC083/VNI2</scope>
</reference>
<reference key="8">
    <citation type="journal article" date="2014" name="PLoS ONE">
        <title>Arabidopsis NAC domain proteins, VND1 to VND5, are transcriptional regulators of secondary wall biosynthesis in vessels.</title>
        <authorList>
            <person name="Zhou J."/>
            <person name="Zhong R."/>
            <person name="Ye Z.-H."/>
        </authorList>
    </citation>
    <scope>FUNCTION</scope>
    <scope>TISSUE SPECIFICITY</scope>
    <scope>DEVELOPMENTAL STAGE</scope>
</reference>
<name>NAC26_ARATH</name>
<sequence length="394" mass="45585">MNSFSQVPPGFRFHPTDEELVDYYLRKKVASKRIEIDIIKDVDLYKIEPCDLQELCKIGNEEQSEWYFFSHKDKKYPTGTRTNRATKAGFWKATGRDKAIYIRHSLIGMRKTLVFYKGRAPNGQKSDWIMHEYRLETSENGTPQEEGWVVCRVFKKKLAATVRKMGDYHSSPSQHWYDDQLSFMASEIISSSPRQFLPNHHYNRHHHQQTLPCGLNAFNNNNPNLQCKQELELHYNQMVQHQQQNHHLRESMFLQLPQLESPTSNCNSDNNNNTRNISNLQKSSNISHEEQLQQGNQSFSSLYYDQGVEQMTTDWRVLDKFVASQLSNDEEAAAVVSSSSHQNNVKIDTRNTGYHVIDEGINLPENDSERVVEMGEEYSNAHAASTSSSCQIDL</sequence>
<accession>F4HYV5</accession>
<accession>Q9SI80</accession>
<dbReference type="EMBL" id="AC007190">
    <property type="protein sequence ID" value="AAF19551.1"/>
    <property type="status" value="ALT_SEQ"/>
    <property type="molecule type" value="Genomic_DNA"/>
</dbReference>
<dbReference type="EMBL" id="CP002684">
    <property type="protein sequence ID" value="AEE33995.1"/>
    <property type="molecule type" value="Genomic_DNA"/>
</dbReference>
<dbReference type="EMBL" id="CP002684">
    <property type="protein sequence ID" value="ANM59940.1"/>
    <property type="molecule type" value="Genomic_DNA"/>
</dbReference>
<dbReference type="SMR" id="F4HYV5"/>
<dbReference type="FunCoup" id="F4HYV5">
    <property type="interactions" value="222"/>
</dbReference>
<dbReference type="IntAct" id="F4HYV5">
    <property type="interactions" value="5"/>
</dbReference>
<dbReference type="STRING" id="3702.F4HYV5"/>
<dbReference type="PaxDb" id="3702-AT1G62700.1"/>
<dbReference type="ProteomicsDB" id="251244"/>
<dbReference type="EnsemblPlants" id="AT1G62700.1">
    <property type="protein sequence ID" value="AT1G62700.1"/>
    <property type="gene ID" value="AT1G62700"/>
</dbReference>
<dbReference type="EnsemblPlants" id="AT1G62700.2">
    <property type="protein sequence ID" value="AT1G62700.2"/>
    <property type="gene ID" value="AT1G62700"/>
</dbReference>
<dbReference type="GeneID" id="842568"/>
<dbReference type="Gramene" id="AT1G62700.1">
    <property type="protein sequence ID" value="AT1G62700.1"/>
    <property type="gene ID" value="AT1G62700"/>
</dbReference>
<dbReference type="Gramene" id="AT1G62700.2">
    <property type="protein sequence ID" value="AT1G62700.2"/>
    <property type="gene ID" value="AT1G62700"/>
</dbReference>
<dbReference type="KEGG" id="ath:AT1G62700"/>
<dbReference type="Araport" id="AT1G62700"/>
<dbReference type="TAIR" id="AT1G62700">
    <property type="gene designation" value="ANAC026"/>
</dbReference>
<dbReference type="eggNOG" id="ENOG502QT6P">
    <property type="taxonomic scope" value="Eukaryota"/>
</dbReference>
<dbReference type="HOGENOM" id="CLU_035664_1_2_1"/>
<dbReference type="InParanoid" id="F4HYV5"/>
<dbReference type="OMA" id="LYYDQGV"/>
<dbReference type="PRO" id="PR:F4HYV5"/>
<dbReference type="Proteomes" id="UP000006548">
    <property type="component" value="Chromosome 1"/>
</dbReference>
<dbReference type="ExpressionAtlas" id="F4HYV5">
    <property type="expression patterns" value="baseline and differential"/>
</dbReference>
<dbReference type="GO" id="GO:0005634">
    <property type="term" value="C:nucleus"/>
    <property type="evidence" value="ECO:0007669"/>
    <property type="project" value="UniProtKB-SubCell"/>
</dbReference>
<dbReference type="GO" id="GO:0003700">
    <property type="term" value="F:DNA-binding transcription factor activity"/>
    <property type="evidence" value="ECO:0000250"/>
    <property type="project" value="UniProtKB"/>
</dbReference>
<dbReference type="GO" id="GO:0043565">
    <property type="term" value="F:sequence-specific DNA binding"/>
    <property type="evidence" value="ECO:0000250"/>
    <property type="project" value="UniProtKB"/>
</dbReference>
<dbReference type="GO" id="GO:0071555">
    <property type="term" value="P:cell wall organization"/>
    <property type="evidence" value="ECO:0007669"/>
    <property type="project" value="UniProtKB-KW"/>
</dbReference>
<dbReference type="GO" id="GO:1901348">
    <property type="term" value="P:positive regulation of secondary cell wall biogenesis"/>
    <property type="evidence" value="ECO:0000315"/>
    <property type="project" value="TAIR"/>
</dbReference>
<dbReference type="GO" id="GO:0006355">
    <property type="term" value="P:regulation of DNA-templated transcription"/>
    <property type="evidence" value="ECO:0000315"/>
    <property type="project" value="TAIR"/>
</dbReference>
<dbReference type="GO" id="GO:0048759">
    <property type="term" value="P:xylem vessel member cell differentiation"/>
    <property type="evidence" value="ECO:0000315"/>
    <property type="project" value="TAIR"/>
</dbReference>
<dbReference type="FunFam" id="2.170.150.80:FF:000003">
    <property type="entry name" value="NAC domain-containing protein"/>
    <property type="match status" value="1"/>
</dbReference>
<dbReference type="Gene3D" id="2.170.150.80">
    <property type="entry name" value="NAC domain"/>
    <property type="match status" value="1"/>
</dbReference>
<dbReference type="InterPro" id="IPR003441">
    <property type="entry name" value="NAC-dom"/>
</dbReference>
<dbReference type="InterPro" id="IPR036093">
    <property type="entry name" value="NAC_dom_sf"/>
</dbReference>
<dbReference type="PANTHER" id="PTHR31744:SF230">
    <property type="entry name" value="NAC DOMAIN-CONTAINING PROTEIN"/>
    <property type="match status" value="1"/>
</dbReference>
<dbReference type="PANTHER" id="PTHR31744">
    <property type="entry name" value="PROTEIN CUP-SHAPED COTYLEDON 2-RELATED"/>
    <property type="match status" value="1"/>
</dbReference>
<dbReference type="Pfam" id="PF02365">
    <property type="entry name" value="NAM"/>
    <property type="match status" value="1"/>
</dbReference>
<dbReference type="SUPFAM" id="SSF101941">
    <property type="entry name" value="NAC domain"/>
    <property type="match status" value="1"/>
</dbReference>
<dbReference type="PROSITE" id="PS51005">
    <property type="entry name" value="NAC"/>
    <property type="match status" value="1"/>
</dbReference>
<gene>
    <name evidence="9" type="primary">NAC026</name>
    <name evidence="10" type="synonym">VND5</name>
    <name evidence="12" type="ordered locus">At1g62700</name>
    <name evidence="13" type="ORF">F23N19.6</name>
</gene>
<keyword id="KW-0010">Activator</keyword>
<keyword id="KW-0961">Cell wall biogenesis/degradation</keyword>
<keyword id="KW-0217">Developmental protein</keyword>
<keyword id="KW-0238">DNA-binding</keyword>
<keyword id="KW-0539">Nucleus</keyword>
<keyword id="KW-1185">Reference proteome</keyword>
<keyword id="KW-0804">Transcription</keyword>
<keyword id="KW-0805">Transcription regulation</keyword>
<organism evidence="14">
    <name type="scientific">Arabidopsis thaliana</name>
    <name type="common">Mouse-ear cress</name>
    <dbReference type="NCBI Taxonomy" id="3702"/>
    <lineage>
        <taxon>Eukaryota</taxon>
        <taxon>Viridiplantae</taxon>
        <taxon>Streptophyta</taxon>
        <taxon>Embryophyta</taxon>
        <taxon>Tracheophyta</taxon>
        <taxon>Spermatophyta</taxon>
        <taxon>Magnoliopsida</taxon>
        <taxon>eudicotyledons</taxon>
        <taxon>Gunneridae</taxon>
        <taxon>Pentapetalae</taxon>
        <taxon>rosids</taxon>
        <taxon>malvids</taxon>
        <taxon>Brassicales</taxon>
        <taxon>Brassicaceae</taxon>
        <taxon>Camelineae</taxon>
        <taxon>Arabidopsis</taxon>
    </lineage>
</organism>
<evidence type="ECO:0000250" key="1">
    <source>
        <dbReference type="UniProtKB" id="Q9C8W9"/>
    </source>
</evidence>
<evidence type="ECO:0000250" key="2">
    <source>
        <dbReference type="UniProtKB" id="Q9LVA1"/>
    </source>
</evidence>
<evidence type="ECO:0000255" key="3">
    <source>
        <dbReference type="PROSITE-ProRule" id="PRU00353"/>
    </source>
</evidence>
<evidence type="ECO:0000269" key="4">
    <source>
    </source>
</evidence>
<evidence type="ECO:0000269" key="5">
    <source>
    </source>
</evidence>
<evidence type="ECO:0000269" key="6">
    <source>
    </source>
</evidence>
<evidence type="ECO:0000269" key="7">
    <source>
    </source>
</evidence>
<evidence type="ECO:0000269" key="8">
    <source>
    </source>
</evidence>
<evidence type="ECO:0000303" key="9">
    <source>
    </source>
</evidence>
<evidence type="ECO:0000303" key="10">
    <source>
    </source>
</evidence>
<evidence type="ECO:0000305" key="11"/>
<evidence type="ECO:0000312" key="12">
    <source>
        <dbReference type="Araport" id="AT1G62700"/>
    </source>
</evidence>
<evidence type="ECO:0000312" key="13">
    <source>
        <dbReference type="EMBL" id="AAF19551.1"/>
    </source>
</evidence>
<evidence type="ECO:0000312" key="14">
    <source>
        <dbReference type="Proteomes" id="UP000006548"/>
    </source>
</evidence>